<feature type="chain" id="PRO_0000165391" description="S-adenosylmethionine:tRNA ribosyltransferase-isomerase">
    <location>
        <begin position="1"/>
        <end position="353"/>
    </location>
</feature>
<dbReference type="EC" id="2.4.99.17" evidence="1"/>
<dbReference type="EMBL" id="BX248583">
    <property type="protein sequence ID" value="CAD83742.1"/>
    <property type="molecule type" value="Genomic_DNA"/>
</dbReference>
<dbReference type="SMR" id="Q7VQB2"/>
<dbReference type="STRING" id="203907.Bfl229"/>
<dbReference type="KEGG" id="bfl:Bfl229"/>
<dbReference type="eggNOG" id="COG0809">
    <property type="taxonomic scope" value="Bacteria"/>
</dbReference>
<dbReference type="HOGENOM" id="CLU_039110_1_0_6"/>
<dbReference type="OrthoDB" id="9805933at2"/>
<dbReference type="UniPathway" id="UPA00392"/>
<dbReference type="Proteomes" id="UP000002192">
    <property type="component" value="Chromosome"/>
</dbReference>
<dbReference type="GO" id="GO:0005737">
    <property type="term" value="C:cytoplasm"/>
    <property type="evidence" value="ECO:0007669"/>
    <property type="project" value="UniProtKB-SubCell"/>
</dbReference>
<dbReference type="GO" id="GO:0051075">
    <property type="term" value="F:S-adenosylmethionine:tRNA ribosyltransferase-isomerase activity"/>
    <property type="evidence" value="ECO:0007669"/>
    <property type="project" value="UniProtKB-EC"/>
</dbReference>
<dbReference type="GO" id="GO:0008616">
    <property type="term" value="P:queuosine biosynthetic process"/>
    <property type="evidence" value="ECO:0007669"/>
    <property type="project" value="UniProtKB-UniRule"/>
</dbReference>
<dbReference type="GO" id="GO:0002099">
    <property type="term" value="P:tRNA wobble guanine modification"/>
    <property type="evidence" value="ECO:0007669"/>
    <property type="project" value="TreeGrafter"/>
</dbReference>
<dbReference type="FunFam" id="3.40.1780.10:FF:000001">
    <property type="entry name" value="S-adenosylmethionine:tRNA ribosyltransferase-isomerase"/>
    <property type="match status" value="1"/>
</dbReference>
<dbReference type="Gene3D" id="2.40.10.240">
    <property type="entry name" value="QueA-like"/>
    <property type="match status" value="1"/>
</dbReference>
<dbReference type="Gene3D" id="3.40.1780.10">
    <property type="entry name" value="QueA-like"/>
    <property type="match status" value="1"/>
</dbReference>
<dbReference type="HAMAP" id="MF_00113">
    <property type="entry name" value="QueA"/>
    <property type="match status" value="1"/>
</dbReference>
<dbReference type="InterPro" id="IPR003699">
    <property type="entry name" value="QueA"/>
</dbReference>
<dbReference type="InterPro" id="IPR042118">
    <property type="entry name" value="QueA_dom1"/>
</dbReference>
<dbReference type="InterPro" id="IPR042119">
    <property type="entry name" value="QueA_dom2"/>
</dbReference>
<dbReference type="InterPro" id="IPR036100">
    <property type="entry name" value="QueA_sf"/>
</dbReference>
<dbReference type="NCBIfam" id="NF001140">
    <property type="entry name" value="PRK00147.1"/>
    <property type="match status" value="1"/>
</dbReference>
<dbReference type="NCBIfam" id="TIGR00113">
    <property type="entry name" value="queA"/>
    <property type="match status" value="1"/>
</dbReference>
<dbReference type="PANTHER" id="PTHR30307">
    <property type="entry name" value="S-ADENOSYLMETHIONINE:TRNA RIBOSYLTRANSFERASE-ISOMERASE"/>
    <property type="match status" value="1"/>
</dbReference>
<dbReference type="PANTHER" id="PTHR30307:SF0">
    <property type="entry name" value="S-ADENOSYLMETHIONINE:TRNA RIBOSYLTRANSFERASE-ISOMERASE"/>
    <property type="match status" value="1"/>
</dbReference>
<dbReference type="Pfam" id="PF02547">
    <property type="entry name" value="Queuosine_synth"/>
    <property type="match status" value="1"/>
</dbReference>
<dbReference type="SUPFAM" id="SSF111337">
    <property type="entry name" value="QueA-like"/>
    <property type="match status" value="1"/>
</dbReference>
<gene>
    <name evidence="1" type="primary">queA</name>
    <name type="ordered locus">Bfl229</name>
</gene>
<name>QUEA_BLOFL</name>
<reference key="1">
    <citation type="journal article" date="2003" name="Proc. Natl. Acad. Sci. U.S.A.">
        <title>The genome sequence of Blochmannia floridanus: comparative analysis of reduced genomes.</title>
        <authorList>
            <person name="Gil R."/>
            <person name="Silva F.J."/>
            <person name="Zientz E."/>
            <person name="Delmotte F."/>
            <person name="Gonzalez-Candelas F."/>
            <person name="Latorre A."/>
            <person name="Rausell C."/>
            <person name="Kamerbeek J."/>
            <person name="Gadau J."/>
            <person name="Hoelldobler B."/>
            <person name="van Ham R.C.H.J."/>
            <person name="Gross R."/>
            <person name="Moya A."/>
        </authorList>
    </citation>
    <scope>NUCLEOTIDE SEQUENCE [LARGE SCALE GENOMIC DNA]</scope>
</reference>
<sequence>MRTSDFKFQLPKKLISRYPNLKRSECRLLVFDRLTTKITHHFFSDLPEILNPGDLLIFNDTRVIPARLYGYSVTGKKVEILIERILNDYQAVAHIYSSELVQLGEKFILGSNLNIYIYVIKIYYSYKLFKIYFDNINYNNVLSLLNDIGHIPIPPYFHRLDEIIDYELYQTVYGSKLGSIAAPTAGLHFDTLLINRLLNLGIEISFITLHIGSATFQPVRVTLIEHHVMHDEYIEVSQSTIESILRCKERKNRVIAVGTTVVKALETAAMNTKSLSIIESFSGYSRIFIFPGYRFKIVDSLITNFHLPESTLIMLVAAFAGYRNILRVYNAAIDLNYKFLSYGDSMFITCRSE</sequence>
<comment type="function">
    <text evidence="1">Transfers and isomerizes the ribose moiety from AdoMet to the 7-aminomethyl group of 7-deazaguanine (preQ1-tRNA) to give epoxyqueuosine (oQ-tRNA).</text>
</comment>
<comment type="catalytic activity">
    <reaction evidence="1">
        <text>7-aminomethyl-7-carbaguanosine(34) in tRNA + S-adenosyl-L-methionine = epoxyqueuosine(34) in tRNA + adenine + L-methionine + 2 H(+)</text>
        <dbReference type="Rhea" id="RHEA:32155"/>
        <dbReference type="Rhea" id="RHEA-COMP:10342"/>
        <dbReference type="Rhea" id="RHEA-COMP:18582"/>
        <dbReference type="ChEBI" id="CHEBI:15378"/>
        <dbReference type="ChEBI" id="CHEBI:16708"/>
        <dbReference type="ChEBI" id="CHEBI:57844"/>
        <dbReference type="ChEBI" id="CHEBI:59789"/>
        <dbReference type="ChEBI" id="CHEBI:82833"/>
        <dbReference type="ChEBI" id="CHEBI:194443"/>
        <dbReference type="EC" id="2.4.99.17"/>
    </reaction>
</comment>
<comment type="pathway">
    <text evidence="1">tRNA modification; tRNA-queuosine biosynthesis.</text>
</comment>
<comment type="subunit">
    <text evidence="1">Monomer.</text>
</comment>
<comment type="subcellular location">
    <subcellularLocation>
        <location evidence="1">Cytoplasm</location>
    </subcellularLocation>
</comment>
<comment type="similarity">
    <text evidence="1">Belongs to the QueA family.</text>
</comment>
<proteinExistence type="inferred from homology"/>
<evidence type="ECO:0000255" key="1">
    <source>
        <dbReference type="HAMAP-Rule" id="MF_00113"/>
    </source>
</evidence>
<keyword id="KW-0963">Cytoplasm</keyword>
<keyword id="KW-0671">Queuosine biosynthesis</keyword>
<keyword id="KW-1185">Reference proteome</keyword>
<keyword id="KW-0949">S-adenosyl-L-methionine</keyword>
<keyword id="KW-0808">Transferase</keyword>
<organism>
    <name type="scientific">Blochmanniella floridana</name>
    <dbReference type="NCBI Taxonomy" id="203907"/>
    <lineage>
        <taxon>Bacteria</taxon>
        <taxon>Pseudomonadati</taxon>
        <taxon>Pseudomonadota</taxon>
        <taxon>Gammaproteobacteria</taxon>
        <taxon>Enterobacterales</taxon>
        <taxon>Enterobacteriaceae</taxon>
        <taxon>ant endosymbionts</taxon>
        <taxon>Candidatus Blochmanniella</taxon>
    </lineage>
</organism>
<protein>
    <recommendedName>
        <fullName evidence="1">S-adenosylmethionine:tRNA ribosyltransferase-isomerase</fullName>
        <ecNumber evidence="1">2.4.99.17</ecNumber>
    </recommendedName>
    <alternativeName>
        <fullName evidence="1">Queuosine biosynthesis protein QueA</fullName>
    </alternativeName>
</protein>
<accession>Q7VQB2</accession>